<sequence length="228" mass="26260">MPTNCAAAGCATTYNKHINISFHRFPLDPKRRKEWVRLVRRKNFVPGKHTFLCSKHFEASCFDLTGQTRRLKMDAVPTIFDFCTHIKSMKLKSRNLLKKNNSCSPAGPSNLKSNISSQQVLLEHSYAFRNPMEAKKRIIKLEKEIASLRRKMKTCLQKERRATRRWIKATCLVKNLEANSVLPKGTSEHMLPTALSSLPLEDFKILEQDQQDKTLLSLNLKQTKSTFI</sequence>
<proteinExistence type="evidence at protein level"/>
<protein>
    <recommendedName>
        <fullName>THAP domain-containing protein 2</fullName>
    </recommendedName>
</protein>
<gene>
    <name type="primary">THAP2</name>
</gene>
<organism>
    <name type="scientific">Homo sapiens</name>
    <name type="common">Human</name>
    <dbReference type="NCBI Taxonomy" id="9606"/>
    <lineage>
        <taxon>Eukaryota</taxon>
        <taxon>Metazoa</taxon>
        <taxon>Chordata</taxon>
        <taxon>Craniata</taxon>
        <taxon>Vertebrata</taxon>
        <taxon>Euteleostomi</taxon>
        <taxon>Mammalia</taxon>
        <taxon>Eutheria</taxon>
        <taxon>Euarchontoglires</taxon>
        <taxon>Primates</taxon>
        <taxon>Haplorrhini</taxon>
        <taxon>Catarrhini</taxon>
        <taxon>Hominidae</taxon>
        <taxon>Homo</taxon>
    </lineage>
</organism>
<name>THAP2_HUMAN</name>
<reference key="1">
    <citation type="journal article" date="2001" name="Genome Res.">
        <title>Towards a catalog of human genes and proteins: sequencing and analysis of 500 novel complete protein coding human cDNAs.</title>
        <authorList>
            <person name="Wiemann S."/>
            <person name="Weil B."/>
            <person name="Wellenreuther R."/>
            <person name="Gassenhuber J."/>
            <person name="Glassl S."/>
            <person name="Ansorge W."/>
            <person name="Boecher M."/>
            <person name="Bloecker H."/>
            <person name="Bauersachs S."/>
            <person name="Blum H."/>
            <person name="Lauber J."/>
            <person name="Duesterhoeft A."/>
            <person name="Beyer A."/>
            <person name="Koehrer K."/>
            <person name="Strack N."/>
            <person name="Mewes H.-W."/>
            <person name="Ottenwaelder B."/>
            <person name="Obermaier B."/>
            <person name="Tampe J."/>
            <person name="Heubner D."/>
            <person name="Wambutt R."/>
            <person name="Korn B."/>
            <person name="Klein M."/>
            <person name="Poustka A."/>
        </authorList>
    </citation>
    <scope>NUCLEOTIDE SEQUENCE [LARGE SCALE MRNA]</scope>
    <source>
        <tissue>Brain</tissue>
    </source>
</reference>
<reference key="2">
    <citation type="journal article" date="2004" name="Nat. Genet.">
        <title>Complete sequencing and characterization of 21,243 full-length human cDNAs.</title>
        <authorList>
            <person name="Ota T."/>
            <person name="Suzuki Y."/>
            <person name="Nishikawa T."/>
            <person name="Otsuki T."/>
            <person name="Sugiyama T."/>
            <person name="Irie R."/>
            <person name="Wakamatsu A."/>
            <person name="Hayashi K."/>
            <person name="Sato H."/>
            <person name="Nagai K."/>
            <person name="Kimura K."/>
            <person name="Makita H."/>
            <person name="Sekine M."/>
            <person name="Obayashi M."/>
            <person name="Nishi T."/>
            <person name="Shibahara T."/>
            <person name="Tanaka T."/>
            <person name="Ishii S."/>
            <person name="Yamamoto J."/>
            <person name="Saito K."/>
            <person name="Kawai Y."/>
            <person name="Isono Y."/>
            <person name="Nakamura Y."/>
            <person name="Nagahari K."/>
            <person name="Murakami K."/>
            <person name="Yasuda T."/>
            <person name="Iwayanagi T."/>
            <person name="Wagatsuma M."/>
            <person name="Shiratori A."/>
            <person name="Sudo H."/>
            <person name="Hosoiri T."/>
            <person name="Kaku Y."/>
            <person name="Kodaira H."/>
            <person name="Kondo H."/>
            <person name="Sugawara M."/>
            <person name="Takahashi M."/>
            <person name="Kanda K."/>
            <person name="Yokoi T."/>
            <person name="Furuya T."/>
            <person name="Kikkawa E."/>
            <person name="Omura Y."/>
            <person name="Abe K."/>
            <person name="Kamihara K."/>
            <person name="Katsuta N."/>
            <person name="Sato K."/>
            <person name="Tanikawa M."/>
            <person name="Yamazaki M."/>
            <person name="Ninomiya K."/>
            <person name="Ishibashi T."/>
            <person name="Yamashita H."/>
            <person name="Murakawa K."/>
            <person name="Fujimori K."/>
            <person name="Tanai H."/>
            <person name="Kimata M."/>
            <person name="Watanabe M."/>
            <person name="Hiraoka S."/>
            <person name="Chiba Y."/>
            <person name="Ishida S."/>
            <person name="Ono Y."/>
            <person name="Takiguchi S."/>
            <person name="Watanabe S."/>
            <person name="Yosida M."/>
            <person name="Hotuta T."/>
            <person name="Kusano J."/>
            <person name="Kanehori K."/>
            <person name="Takahashi-Fujii A."/>
            <person name="Hara H."/>
            <person name="Tanase T.-O."/>
            <person name="Nomura Y."/>
            <person name="Togiya S."/>
            <person name="Komai F."/>
            <person name="Hara R."/>
            <person name="Takeuchi K."/>
            <person name="Arita M."/>
            <person name="Imose N."/>
            <person name="Musashino K."/>
            <person name="Yuuki H."/>
            <person name="Oshima A."/>
            <person name="Sasaki N."/>
            <person name="Aotsuka S."/>
            <person name="Yoshikawa Y."/>
            <person name="Matsunawa H."/>
            <person name="Ichihara T."/>
            <person name="Shiohata N."/>
            <person name="Sano S."/>
            <person name="Moriya S."/>
            <person name="Momiyama H."/>
            <person name="Satoh N."/>
            <person name="Takami S."/>
            <person name="Terashima Y."/>
            <person name="Suzuki O."/>
            <person name="Nakagawa S."/>
            <person name="Senoh A."/>
            <person name="Mizoguchi H."/>
            <person name="Goto Y."/>
            <person name="Shimizu F."/>
            <person name="Wakebe H."/>
            <person name="Hishigaki H."/>
            <person name="Watanabe T."/>
            <person name="Sugiyama A."/>
            <person name="Takemoto M."/>
            <person name="Kawakami B."/>
            <person name="Yamazaki M."/>
            <person name="Watanabe K."/>
            <person name="Kumagai A."/>
            <person name="Itakura S."/>
            <person name="Fukuzumi Y."/>
            <person name="Fujimori Y."/>
            <person name="Komiyama M."/>
            <person name="Tashiro H."/>
            <person name="Tanigami A."/>
            <person name="Fujiwara T."/>
            <person name="Ono T."/>
            <person name="Yamada K."/>
            <person name="Fujii Y."/>
            <person name="Ozaki K."/>
            <person name="Hirao M."/>
            <person name="Ohmori Y."/>
            <person name="Kawabata A."/>
            <person name="Hikiji T."/>
            <person name="Kobatake N."/>
            <person name="Inagaki H."/>
            <person name="Ikema Y."/>
            <person name="Okamoto S."/>
            <person name="Okitani R."/>
            <person name="Kawakami T."/>
            <person name="Noguchi S."/>
            <person name="Itoh T."/>
            <person name="Shigeta K."/>
            <person name="Senba T."/>
            <person name="Matsumura K."/>
            <person name="Nakajima Y."/>
            <person name="Mizuno T."/>
            <person name="Morinaga M."/>
            <person name="Sasaki M."/>
            <person name="Togashi T."/>
            <person name="Oyama M."/>
            <person name="Hata H."/>
            <person name="Watanabe M."/>
            <person name="Komatsu T."/>
            <person name="Mizushima-Sugano J."/>
            <person name="Satoh T."/>
            <person name="Shirai Y."/>
            <person name="Takahashi Y."/>
            <person name="Nakagawa K."/>
            <person name="Okumura K."/>
            <person name="Nagase T."/>
            <person name="Nomura N."/>
            <person name="Kikuchi H."/>
            <person name="Masuho Y."/>
            <person name="Yamashita R."/>
            <person name="Nakai K."/>
            <person name="Yada T."/>
            <person name="Nakamura Y."/>
            <person name="Ohara O."/>
            <person name="Isogai T."/>
            <person name="Sugano S."/>
        </authorList>
    </citation>
    <scope>NUCLEOTIDE SEQUENCE [LARGE SCALE MRNA]</scope>
    <source>
        <tissue>Brain</tissue>
    </source>
</reference>
<reference key="3">
    <citation type="submission" date="2005-07" db="EMBL/GenBank/DDBJ databases">
        <authorList>
            <person name="Mural R.J."/>
            <person name="Istrail S."/>
            <person name="Sutton G.G."/>
            <person name="Florea L."/>
            <person name="Halpern A.L."/>
            <person name="Mobarry C.M."/>
            <person name="Lippert R."/>
            <person name="Walenz B."/>
            <person name="Shatkay H."/>
            <person name="Dew I."/>
            <person name="Miller J.R."/>
            <person name="Flanigan M.J."/>
            <person name="Edwards N.J."/>
            <person name="Bolanos R."/>
            <person name="Fasulo D."/>
            <person name="Halldorsson B.V."/>
            <person name="Hannenhalli S."/>
            <person name="Turner R."/>
            <person name="Yooseph S."/>
            <person name="Lu F."/>
            <person name="Nusskern D.R."/>
            <person name="Shue B.C."/>
            <person name="Zheng X.H."/>
            <person name="Zhong F."/>
            <person name="Delcher A.L."/>
            <person name="Huson D.H."/>
            <person name="Kravitz S.A."/>
            <person name="Mouchard L."/>
            <person name="Reinert K."/>
            <person name="Remington K.A."/>
            <person name="Clark A.G."/>
            <person name="Waterman M.S."/>
            <person name="Eichler E.E."/>
            <person name="Adams M.D."/>
            <person name="Hunkapiller M.W."/>
            <person name="Myers E.W."/>
            <person name="Venter J.C."/>
        </authorList>
    </citation>
    <scope>NUCLEOTIDE SEQUENCE [LARGE SCALE GENOMIC DNA]</scope>
</reference>
<reference key="4">
    <citation type="journal article" date="2004" name="Genome Res.">
        <title>The status, quality, and expansion of the NIH full-length cDNA project: the Mammalian Gene Collection (MGC).</title>
        <authorList>
            <consortium name="The MGC Project Team"/>
        </authorList>
    </citation>
    <scope>NUCLEOTIDE SEQUENCE [LARGE SCALE MRNA]</scope>
    <source>
        <tissue>Uterus</tissue>
    </source>
</reference>
<reference key="5">
    <citation type="submission" date="2006-06" db="PDB data bank">
        <title>Solution structure of the THAP domain of the human THAP domain-containing protein 2.</title>
        <authorList>
            <consortium name="RIKEN structural genomics initiative (RSGI)"/>
        </authorList>
    </citation>
    <scope>STRUCTURE BY NMR OF 1-86</scope>
</reference>
<feature type="chain" id="PRO_0000068642" description="THAP domain-containing protein 2">
    <location>
        <begin position="1"/>
        <end position="228"/>
    </location>
</feature>
<feature type="zinc finger region" description="THAP-type" evidence="2">
    <location>
        <begin position="1"/>
        <end position="80"/>
    </location>
</feature>
<feature type="short sequence motif" description="HCFC1-binding motif (HBM)" evidence="1">
    <location>
        <begin position="123"/>
        <end position="126"/>
    </location>
</feature>
<feature type="sequence variant" id="VAR_034551" description="In dbSNP:rs17110155.">
    <original>T</original>
    <variation>M</variation>
    <location>
        <position position="170"/>
    </location>
</feature>
<feature type="strand" evidence="3">
    <location>
        <begin position="7"/>
        <end position="9"/>
    </location>
</feature>
<feature type="helix" evidence="3">
    <location>
        <begin position="29"/>
        <end position="38"/>
    </location>
</feature>
<feature type="strand" evidence="3">
    <location>
        <begin position="47"/>
        <end position="49"/>
    </location>
</feature>
<accession>Q9H0W7</accession>
<accession>B2R8P3</accession>
<dbReference type="EMBL" id="AL136607">
    <property type="protein sequence ID" value="CAB66542.1"/>
    <property type="molecule type" value="mRNA"/>
</dbReference>
<dbReference type="EMBL" id="AK313452">
    <property type="protein sequence ID" value="BAG36240.1"/>
    <property type="molecule type" value="mRNA"/>
</dbReference>
<dbReference type="EMBL" id="CH471054">
    <property type="protein sequence ID" value="EAW97265.1"/>
    <property type="molecule type" value="Genomic_DNA"/>
</dbReference>
<dbReference type="EMBL" id="BC008358">
    <property type="protein sequence ID" value="AAH08358.1"/>
    <property type="molecule type" value="mRNA"/>
</dbReference>
<dbReference type="CCDS" id="CCDS9001.1"/>
<dbReference type="RefSeq" id="NP_113623.1">
    <property type="nucleotide sequence ID" value="NM_031435.4"/>
</dbReference>
<dbReference type="PDB" id="2D8R">
    <property type="method" value="NMR"/>
    <property type="chains" value="A=1-86"/>
</dbReference>
<dbReference type="PDBsum" id="2D8R"/>
<dbReference type="BMRB" id="Q9H0W7"/>
<dbReference type="SMR" id="Q9H0W7"/>
<dbReference type="BioGRID" id="123687">
    <property type="interactions" value="15"/>
</dbReference>
<dbReference type="ELM" id="Q9H0W7"/>
<dbReference type="FunCoup" id="Q9H0W7">
    <property type="interactions" value="1578"/>
</dbReference>
<dbReference type="IntAct" id="Q9H0W7">
    <property type="interactions" value="9"/>
</dbReference>
<dbReference type="MINT" id="Q9H0W7"/>
<dbReference type="STRING" id="9606.ENSP00000310796"/>
<dbReference type="iPTMnet" id="Q9H0W7"/>
<dbReference type="PhosphoSitePlus" id="Q9H0W7"/>
<dbReference type="BioMuta" id="THAP2"/>
<dbReference type="DMDM" id="29839633"/>
<dbReference type="jPOST" id="Q9H0W7"/>
<dbReference type="MassIVE" id="Q9H0W7"/>
<dbReference type="PaxDb" id="9606-ENSP00000310796"/>
<dbReference type="PeptideAtlas" id="Q9H0W7"/>
<dbReference type="ProteomicsDB" id="80332"/>
<dbReference type="Antibodypedia" id="44377">
    <property type="antibodies" value="63 antibodies from 18 providers"/>
</dbReference>
<dbReference type="DNASU" id="83591"/>
<dbReference type="Ensembl" id="ENST00000308086.3">
    <property type="protein sequence ID" value="ENSP00000310796.2"/>
    <property type="gene ID" value="ENSG00000173451.7"/>
</dbReference>
<dbReference type="GeneID" id="83591"/>
<dbReference type="KEGG" id="hsa:83591"/>
<dbReference type="MANE-Select" id="ENST00000308086.3">
    <property type="protein sequence ID" value="ENSP00000310796.2"/>
    <property type="RefSeq nucleotide sequence ID" value="NM_031435.4"/>
    <property type="RefSeq protein sequence ID" value="NP_113623.1"/>
</dbReference>
<dbReference type="UCSC" id="uc001swq.4">
    <property type="organism name" value="human"/>
</dbReference>
<dbReference type="AGR" id="HGNC:20854"/>
<dbReference type="CTD" id="83591"/>
<dbReference type="GeneCards" id="THAP2"/>
<dbReference type="HGNC" id="HGNC:20854">
    <property type="gene designation" value="THAP2"/>
</dbReference>
<dbReference type="HPA" id="ENSG00000173451">
    <property type="expression patterns" value="Low tissue specificity"/>
</dbReference>
<dbReference type="MIM" id="612531">
    <property type="type" value="gene"/>
</dbReference>
<dbReference type="neXtProt" id="NX_Q9H0W7"/>
<dbReference type="OpenTargets" id="ENSG00000173451"/>
<dbReference type="PharmGKB" id="PA134886354"/>
<dbReference type="VEuPathDB" id="HostDB:ENSG00000173451"/>
<dbReference type="eggNOG" id="ENOG502RYEP">
    <property type="taxonomic scope" value="Eukaryota"/>
</dbReference>
<dbReference type="GeneTree" id="ENSGT00940000161088"/>
<dbReference type="HOGENOM" id="CLU_076186_2_2_1"/>
<dbReference type="InParanoid" id="Q9H0W7"/>
<dbReference type="OMA" id="RGTSEHI"/>
<dbReference type="OrthoDB" id="7312725at2759"/>
<dbReference type="PAN-GO" id="Q9H0W7">
    <property type="GO annotations" value="1 GO annotation based on evolutionary models"/>
</dbReference>
<dbReference type="PhylomeDB" id="Q9H0W7"/>
<dbReference type="TreeFam" id="TF330127"/>
<dbReference type="PathwayCommons" id="Q9H0W7"/>
<dbReference type="SignaLink" id="Q9H0W7"/>
<dbReference type="BioGRID-ORCS" id="83591">
    <property type="hits" value="7 hits in 1178 CRISPR screens"/>
</dbReference>
<dbReference type="EvolutionaryTrace" id="Q9H0W7"/>
<dbReference type="GeneWiki" id="THAP2"/>
<dbReference type="GenomeRNAi" id="83591"/>
<dbReference type="Pharos" id="Q9H0W7">
    <property type="development level" value="Tbio"/>
</dbReference>
<dbReference type="PRO" id="PR:Q9H0W7"/>
<dbReference type="Proteomes" id="UP000005640">
    <property type="component" value="Chromosome 12"/>
</dbReference>
<dbReference type="RNAct" id="Q9H0W7">
    <property type="molecule type" value="protein"/>
</dbReference>
<dbReference type="Bgee" id="ENSG00000173451">
    <property type="expression patterns" value="Expressed in cortical plate and 126 other cell types or tissues"/>
</dbReference>
<dbReference type="ExpressionAtlas" id="Q9H0W7">
    <property type="expression patterns" value="baseline and differential"/>
</dbReference>
<dbReference type="GO" id="GO:0005730">
    <property type="term" value="C:nucleolus"/>
    <property type="evidence" value="ECO:0000314"/>
    <property type="project" value="LIFEdb"/>
</dbReference>
<dbReference type="GO" id="GO:0005634">
    <property type="term" value="C:nucleus"/>
    <property type="evidence" value="ECO:0000318"/>
    <property type="project" value="GO_Central"/>
</dbReference>
<dbReference type="GO" id="GO:0003677">
    <property type="term" value="F:DNA binding"/>
    <property type="evidence" value="ECO:0007669"/>
    <property type="project" value="UniProtKB-KW"/>
</dbReference>
<dbReference type="GO" id="GO:0008270">
    <property type="term" value="F:zinc ion binding"/>
    <property type="evidence" value="ECO:0007669"/>
    <property type="project" value="UniProtKB-KW"/>
</dbReference>
<dbReference type="Gene3D" id="6.20.210.20">
    <property type="entry name" value="THAP domain"/>
    <property type="match status" value="1"/>
</dbReference>
<dbReference type="InterPro" id="IPR026521">
    <property type="entry name" value="THAP2"/>
</dbReference>
<dbReference type="InterPro" id="IPR006612">
    <property type="entry name" value="THAP_Znf"/>
</dbReference>
<dbReference type="InterPro" id="IPR038441">
    <property type="entry name" value="THAP_Znf_sf"/>
</dbReference>
<dbReference type="PANTHER" id="PTHR47696">
    <property type="entry name" value="THAP DOMAIN-CONTAINING PROTEIN 2"/>
    <property type="match status" value="1"/>
</dbReference>
<dbReference type="PANTHER" id="PTHR47696:SF1">
    <property type="entry name" value="THAP DOMAIN-CONTAINING PROTEIN 2"/>
    <property type="match status" value="1"/>
</dbReference>
<dbReference type="Pfam" id="PF05485">
    <property type="entry name" value="THAP"/>
    <property type="match status" value="1"/>
</dbReference>
<dbReference type="SMART" id="SM00692">
    <property type="entry name" value="DM3"/>
    <property type="match status" value="1"/>
</dbReference>
<dbReference type="SMART" id="SM00980">
    <property type="entry name" value="THAP"/>
    <property type="match status" value="1"/>
</dbReference>
<dbReference type="SUPFAM" id="SSF57716">
    <property type="entry name" value="Glucocorticoid receptor-like (DNA-binding domain)"/>
    <property type="match status" value="1"/>
</dbReference>
<dbReference type="PROSITE" id="PS50950">
    <property type="entry name" value="ZF_THAP"/>
    <property type="match status" value="1"/>
</dbReference>
<keyword id="KW-0002">3D-structure</keyword>
<keyword id="KW-0238">DNA-binding</keyword>
<keyword id="KW-0479">Metal-binding</keyword>
<keyword id="KW-1267">Proteomics identification</keyword>
<keyword id="KW-1185">Reference proteome</keyword>
<keyword id="KW-0862">Zinc</keyword>
<keyword id="KW-0863">Zinc-finger</keyword>
<evidence type="ECO:0000250" key="1"/>
<evidence type="ECO:0000255" key="2">
    <source>
        <dbReference type="PROSITE-ProRule" id="PRU00309"/>
    </source>
</evidence>
<evidence type="ECO:0007829" key="3">
    <source>
        <dbReference type="PDB" id="2D8R"/>
    </source>
</evidence>